<gene>
    <name evidence="1" type="primary">lpxH</name>
    <name type="ordered locus">Noc_2252</name>
</gene>
<sequence length="250" mass="27949">MATFFISDLHLGTGKTEIQLRAIEFLSQEAPYGDALYILGDLFDYWIGDDAPTAEGLAIITALRRLADVGVTLHFLSGNRDFLVGQVFSQASGCQILSDPAIIDLYGVPTLLMHGDTLCTDDVAYQRARARLRRPAILRTYLALPKSWRRAVAQRLRRQSQAHVQHQPLTIMDVNQTAVETALRIHGVKQLIHGHTHRPAVHHFTVDGHPRQRIVLGDWDRGKSALSCTPEGFHFSDSRILEPRFGNLQG</sequence>
<proteinExistence type="inferred from homology"/>
<comment type="function">
    <text evidence="1">Hydrolyzes the pyrophosphate bond of UDP-2,3-diacylglucosamine to yield 2,3-diacylglucosamine 1-phosphate (lipid X) and UMP by catalyzing the attack of water at the alpha-P atom. Involved in the biosynthesis of lipid A, a phosphorylated glycolipid that anchors the lipopolysaccharide to the outer membrane of the cell.</text>
</comment>
<comment type="catalytic activity">
    <reaction evidence="1">
        <text>UDP-2-N,3-O-bis[(3R)-3-hydroxytetradecanoyl]-alpha-D-glucosamine + H2O = 2-N,3-O-bis[(3R)-3-hydroxytetradecanoyl]-alpha-D-glucosaminyl 1-phosphate + UMP + 2 H(+)</text>
        <dbReference type="Rhea" id="RHEA:25213"/>
        <dbReference type="ChEBI" id="CHEBI:15377"/>
        <dbReference type="ChEBI" id="CHEBI:15378"/>
        <dbReference type="ChEBI" id="CHEBI:57865"/>
        <dbReference type="ChEBI" id="CHEBI:57957"/>
        <dbReference type="ChEBI" id="CHEBI:78847"/>
        <dbReference type="EC" id="3.6.1.54"/>
    </reaction>
</comment>
<comment type="cofactor">
    <cofactor evidence="1">
        <name>Mn(2+)</name>
        <dbReference type="ChEBI" id="CHEBI:29035"/>
    </cofactor>
    <text evidence="1">Binds 2 Mn(2+) ions per subunit in a binuclear metal center.</text>
</comment>
<comment type="pathway">
    <text evidence="1">Glycolipid biosynthesis; lipid IV(A) biosynthesis; lipid IV(A) from (3R)-3-hydroxytetradecanoyl-[acyl-carrier-protein] and UDP-N-acetyl-alpha-D-glucosamine: step 4/6.</text>
</comment>
<comment type="subcellular location">
    <subcellularLocation>
        <location evidence="1">Cell inner membrane</location>
        <topology evidence="1">Peripheral membrane protein</topology>
        <orientation evidence="1">Cytoplasmic side</orientation>
    </subcellularLocation>
</comment>
<comment type="similarity">
    <text evidence="1">Belongs to the LpxH family.</text>
</comment>
<organism>
    <name type="scientific">Nitrosococcus oceani (strain ATCC 19707 / BCRC 17464 / JCM 30415 / NCIMB 11848 / C-107)</name>
    <dbReference type="NCBI Taxonomy" id="323261"/>
    <lineage>
        <taxon>Bacteria</taxon>
        <taxon>Pseudomonadati</taxon>
        <taxon>Pseudomonadota</taxon>
        <taxon>Gammaproteobacteria</taxon>
        <taxon>Chromatiales</taxon>
        <taxon>Chromatiaceae</taxon>
        <taxon>Nitrosococcus</taxon>
    </lineage>
</organism>
<evidence type="ECO:0000255" key="1">
    <source>
        <dbReference type="HAMAP-Rule" id="MF_00575"/>
    </source>
</evidence>
<protein>
    <recommendedName>
        <fullName evidence="1">UDP-2,3-diacylglucosamine hydrolase</fullName>
        <ecNumber evidence="1">3.6.1.54</ecNumber>
    </recommendedName>
    <alternativeName>
        <fullName evidence="1">UDP-2,3-diacylglucosamine diphosphatase</fullName>
    </alternativeName>
</protein>
<dbReference type="EC" id="3.6.1.54" evidence="1"/>
<dbReference type="EMBL" id="CP000127">
    <property type="protein sequence ID" value="ABA58710.1"/>
    <property type="molecule type" value="Genomic_DNA"/>
</dbReference>
<dbReference type="RefSeq" id="WP_002809310.1">
    <property type="nucleotide sequence ID" value="NC_007484.1"/>
</dbReference>
<dbReference type="SMR" id="Q3J8Y6"/>
<dbReference type="FunCoup" id="Q3J8Y6">
    <property type="interactions" value="156"/>
</dbReference>
<dbReference type="STRING" id="323261.Noc_2252"/>
<dbReference type="KEGG" id="noc:Noc_2252"/>
<dbReference type="eggNOG" id="COG2908">
    <property type="taxonomic scope" value="Bacteria"/>
</dbReference>
<dbReference type="HOGENOM" id="CLU_074586_0_0_6"/>
<dbReference type="InParanoid" id="Q3J8Y6"/>
<dbReference type="UniPathway" id="UPA00359">
    <property type="reaction ID" value="UER00480"/>
</dbReference>
<dbReference type="Proteomes" id="UP000006838">
    <property type="component" value="Chromosome"/>
</dbReference>
<dbReference type="GO" id="GO:0005737">
    <property type="term" value="C:cytoplasm"/>
    <property type="evidence" value="ECO:0007669"/>
    <property type="project" value="InterPro"/>
</dbReference>
<dbReference type="GO" id="GO:0019897">
    <property type="term" value="C:extrinsic component of plasma membrane"/>
    <property type="evidence" value="ECO:0007669"/>
    <property type="project" value="UniProtKB-UniRule"/>
</dbReference>
<dbReference type="GO" id="GO:0030145">
    <property type="term" value="F:manganese ion binding"/>
    <property type="evidence" value="ECO:0007669"/>
    <property type="project" value="UniProtKB-UniRule"/>
</dbReference>
<dbReference type="GO" id="GO:0008758">
    <property type="term" value="F:UDP-2,3-diacylglucosamine hydrolase activity"/>
    <property type="evidence" value="ECO:0007669"/>
    <property type="project" value="UniProtKB-UniRule"/>
</dbReference>
<dbReference type="GO" id="GO:0009245">
    <property type="term" value="P:lipid A biosynthetic process"/>
    <property type="evidence" value="ECO:0007669"/>
    <property type="project" value="UniProtKB-UniRule"/>
</dbReference>
<dbReference type="CDD" id="cd07398">
    <property type="entry name" value="MPP_YbbF-LpxH"/>
    <property type="match status" value="1"/>
</dbReference>
<dbReference type="Gene3D" id="3.60.21.10">
    <property type="match status" value="1"/>
</dbReference>
<dbReference type="HAMAP" id="MF_00575">
    <property type="entry name" value="LpxH"/>
    <property type="match status" value="1"/>
</dbReference>
<dbReference type="InterPro" id="IPR004843">
    <property type="entry name" value="Calcineurin-like_PHP_ApaH"/>
</dbReference>
<dbReference type="InterPro" id="IPR043461">
    <property type="entry name" value="LpxH-like"/>
</dbReference>
<dbReference type="InterPro" id="IPR029052">
    <property type="entry name" value="Metallo-depent_PP-like"/>
</dbReference>
<dbReference type="InterPro" id="IPR010138">
    <property type="entry name" value="UDP-diacylglucosamine_Hdrlase"/>
</dbReference>
<dbReference type="NCBIfam" id="TIGR01854">
    <property type="entry name" value="lipid_A_lpxH"/>
    <property type="match status" value="1"/>
</dbReference>
<dbReference type="NCBIfam" id="NF003743">
    <property type="entry name" value="PRK05340.1"/>
    <property type="match status" value="1"/>
</dbReference>
<dbReference type="PANTHER" id="PTHR34990:SF1">
    <property type="entry name" value="UDP-2,3-DIACYLGLUCOSAMINE HYDROLASE"/>
    <property type="match status" value="1"/>
</dbReference>
<dbReference type="PANTHER" id="PTHR34990">
    <property type="entry name" value="UDP-2,3-DIACYLGLUCOSAMINE HYDROLASE-RELATED"/>
    <property type="match status" value="1"/>
</dbReference>
<dbReference type="Pfam" id="PF00149">
    <property type="entry name" value="Metallophos"/>
    <property type="match status" value="1"/>
</dbReference>
<dbReference type="SUPFAM" id="SSF56300">
    <property type="entry name" value="Metallo-dependent phosphatases"/>
    <property type="match status" value="1"/>
</dbReference>
<name>LPXH_NITOC</name>
<accession>Q3J8Y6</accession>
<keyword id="KW-0997">Cell inner membrane</keyword>
<keyword id="KW-1003">Cell membrane</keyword>
<keyword id="KW-0378">Hydrolase</keyword>
<keyword id="KW-0441">Lipid A biosynthesis</keyword>
<keyword id="KW-0444">Lipid biosynthesis</keyword>
<keyword id="KW-0443">Lipid metabolism</keyword>
<keyword id="KW-0464">Manganese</keyword>
<keyword id="KW-0472">Membrane</keyword>
<keyword id="KW-0479">Metal-binding</keyword>
<keyword id="KW-1185">Reference proteome</keyword>
<reference key="1">
    <citation type="journal article" date="2006" name="Appl. Environ. Microbiol.">
        <title>Complete genome sequence of the marine, chemolithoautotrophic, ammonia-oxidizing bacterium Nitrosococcus oceani ATCC 19707.</title>
        <authorList>
            <person name="Klotz M.G."/>
            <person name="Arp D.J."/>
            <person name="Chain P.S.G."/>
            <person name="El-Sheikh A.F."/>
            <person name="Hauser L.J."/>
            <person name="Hommes N.G."/>
            <person name="Larimer F.W."/>
            <person name="Malfatti S.A."/>
            <person name="Norton J.M."/>
            <person name="Poret-Peterson A.T."/>
            <person name="Vergez L.M."/>
            <person name="Ward B.B."/>
        </authorList>
    </citation>
    <scope>NUCLEOTIDE SEQUENCE [LARGE SCALE GENOMIC DNA]</scope>
    <source>
        <strain>ATCC 19707 / BCRC 17464 / JCM 30415 / NCIMB 11848 / C-107</strain>
    </source>
</reference>
<feature type="chain" id="PRO_1000025065" description="UDP-2,3-diacylglucosamine hydrolase">
    <location>
        <begin position="1"/>
        <end position="250"/>
    </location>
</feature>
<feature type="binding site" evidence="1">
    <location>
        <position position="8"/>
    </location>
    <ligand>
        <name>Mn(2+)</name>
        <dbReference type="ChEBI" id="CHEBI:29035"/>
        <label>1</label>
    </ligand>
</feature>
<feature type="binding site" evidence="1">
    <location>
        <position position="10"/>
    </location>
    <ligand>
        <name>Mn(2+)</name>
        <dbReference type="ChEBI" id="CHEBI:29035"/>
        <label>1</label>
    </ligand>
</feature>
<feature type="binding site" evidence="1">
    <location>
        <position position="41"/>
    </location>
    <ligand>
        <name>Mn(2+)</name>
        <dbReference type="ChEBI" id="CHEBI:29035"/>
        <label>1</label>
    </ligand>
</feature>
<feature type="binding site" evidence="1">
    <location>
        <position position="41"/>
    </location>
    <ligand>
        <name>Mn(2+)</name>
        <dbReference type="ChEBI" id="CHEBI:29035"/>
        <label>2</label>
    </ligand>
</feature>
<feature type="binding site" evidence="1">
    <location>
        <begin position="79"/>
        <end position="80"/>
    </location>
    <ligand>
        <name>substrate</name>
    </ligand>
</feature>
<feature type="binding site" evidence="1">
    <location>
        <position position="79"/>
    </location>
    <ligand>
        <name>Mn(2+)</name>
        <dbReference type="ChEBI" id="CHEBI:29035"/>
        <label>2</label>
    </ligand>
</feature>
<feature type="binding site" evidence="1">
    <location>
        <position position="114"/>
    </location>
    <ligand>
        <name>Mn(2+)</name>
        <dbReference type="ChEBI" id="CHEBI:29035"/>
        <label>2</label>
    </ligand>
</feature>
<feature type="binding site" evidence="1">
    <location>
        <position position="122"/>
    </location>
    <ligand>
        <name>substrate</name>
    </ligand>
</feature>
<feature type="binding site" evidence="1">
    <location>
        <position position="160"/>
    </location>
    <ligand>
        <name>substrate</name>
    </ligand>
</feature>
<feature type="binding site" evidence="1">
    <location>
        <position position="167"/>
    </location>
    <ligand>
        <name>substrate</name>
    </ligand>
</feature>
<feature type="binding site" evidence="1">
    <location>
        <position position="195"/>
    </location>
    <ligand>
        <name>Mn(2+)</name>
        <dbReference type="ChEBI" id="CHEBI:29035"/>
        <label>2</label>
    </ligand>
</feature>
<feature type="binding site" evidence="1">
    <location>
        <position position="195"/>
    </location>
    <ligand>
        <name>substrate</name>
    </ligand>
</feature>
<feature type="binding site" evidence="1">
    <location>
        <position position="197"/>
    </location>
    <ligand>
        <name>Mn(2+)</name>
        <dbReference type="ChEBI" id="CHEBI:29035"/>
        <label>1</label>
    </ligand>
</feature>